<protein>
    <recommendedName>
        <fullName evidence="1">Nucleotide-binding protein Suden_0039</fullName>
    </recommendedName>
</protein>
<dbReference type="EMBL" id="CP000153">
    <property type="protein sequence ID" value="ABB43320.1"/>
    <property type="molecule type" value="Genomic_DNA"/>
</dbReference>
<dbReference type="RefSeq" id="WP_011371675.1">
    <property type="nucleotide sequence ID" value="NC_007575.1"/>
</dbReference>
<dbReference type="SMR" id="Q30UL1"/>
<dbReference type="STRING" id="326298.Suden_0039"/>
<dbReference type="KEGG" id="tdn:Suden_0039"/>
<dbReference type="eggNOG" id="COG1666">
    <property type="taxonomic scope" value="Bacteria"/>
</dbReference>
<dbReference type="HOGENOM" id="CLU_099839_1_0_7"/>
<dbReference type="OrthoDB" id="9801447at2"/>
<dbReference type="Proteomes" id="UP000002714">
    <property type="component" value="Chromosome"/>
</dbReference>
<dbReference type="GO" id="GO:0005829">
    <property type="term" value="C:cytosol"/>
    <property type="evidence" value="ECO:0007669"/>
    <property type="project" value="TreeGrafter"/>
</dbReference>
<dbReference type="GO" id="GO:0000166">
    <property type="term" value="F:nucleotide binding"/>
    <property type="evidence" value="ECO:0007669"/>
    <property type="project" value="TreeGrafter"/>
</dbReference>
<dbReference type="CDD" id="cd11740">
    <property type="entry name" value="YajQ_like"/>
    <property type="match status" value="1"/>
</dbReference>
<dbReference type="Gene3D" id="3.30.70.860">
    <property type="match status" value="1"/>
</dbReference>
<dbReference type="Gene3D" id="3.30.70.990">
    <property type="entry name" value="YajQ-like, domain 2"/>
    <property type="match status" value="1"/>
</dbReference>
<dbReference type="HAMAP" id="MF_00632">
    <property type="entry name" value="YajQ"/>
    <property type="match status" value="1"/>
</dbReference>
<dbReference type="InterPro" id="IPR007551">
    <property type="entry name" value="DUF520"/>
</dbReference>
<dbReference type="InterPro" id="IPR035571">
    <property type="entry name" value="UPF0234-like_C"/>
</dbReference>
<dbReference type="InterPro" id="IPR035570">
    <property type="entry name" value="UPF0234_N"/>
</dbReference>
<dbReference type="InterPro" id="IPR036183">
    <property type="entry name" value="YajQ-like_sf"/>
</dbReference>
<dbReference type="NCBIfam" id="NF003819">
    <property type="entry name" value="PRK05412.1"/>
    <property type="match status" value="1"/>
</dbReference>
<dbReference type="PANTHER" id="PTHR30476">
    <property type="entry name" value="UPF0234 PROTEIN YAJQ"/>
    <property type="match status" value="1"/>
</dbReference>
<dbReference type="PANTHER" id="PTHR30476:SF0">
    <property type="entry name" value="UPF0234 PROTEIN YAJQ"/>
    <property type="match status" value="1"/>
</dbReference>
<dbReference type="Pfam" id="PF04461">
    <property type="entry name" value="DUF520"/>
    <property type="match status" value="1"/>
</dbReference>
<dbReference type="SUPFAM" id="SSF89963">
    <property type="entry name" value="YajQ-like"/>
    <property type="match status" value="2"/>
</dbReference>
<feature type="chain" id="PRO_1000147325" description="Nucleotide-binding protein Suden_0039">
    <location>
        <begin position="1"/>
        <end position="165"/>
    </location>
</feature>
<gene>
    <name type="ordered locus">Suden_0039</name>
</gene>
<evidence type="ECO:0000255" key="1">
    <source>
        <dbReference type="HAMAP-Rule" id="MF_00632"/>
    </source>
</evidence>
<sequence>MAKEYSFDISAKIDMQSFKNAINLVDKEVANRYDFKGTTYEVDYKEKDKLLVMVASSDNKLDALKDIVITKLLKQNLSSKVLEEQKTENSSGNNRKVTFKIVDYIESKEAKKIAAEIKNLKLKVTAQIEGDSIRVKGAKLDDLQKVIATIRSMEWEAPLVFENMR</sequence>
<name>Y039_SULDN</name>
<organism>
    <name type="scientific">Sulfurimonas denitrificans (strain ATCC 33889 / DSM 1251)</name>
    <name type="common">Thiomicrospira denitrificans (strain ATCC 33889 / DSM 1251)</name>
    <dbReference type="NCBI Taxonomy" id="326298"/>
    <lineage>
        <taxon>Bacteria</taxon>
        <taxon>Pseudomonadati</taxon>
        <taxon>Campylobacterota</taxon>
        <taxon>Epsilonproteobacteria</taxon>
        <taxon>Campylobacterales</taxon>
        <taxon>Sulfurimonadaceae</taxon>
        <taxon>Sulfurimonas</taxon>
    </lineage>
</organism>
<reference key="1">
    <citation type="journal article" date="2008" name="Appl. Environ. Microbiol.">
        <title>Genome of the epsilonproteobacterial chemolithoautotroph Sulfurimonas denitrificans.</title>
        <authorList>
            <person name="Sievert S.M."/>
            <person name="Scott K.M."/>
            <person name="Klotz M.G."/>
            <person name="Chain P.S.G."/>
            <person name="Hauser L.J."/>
            <person name="Hemp J."/>
            <person name="Huegler M."/>
            <person name="Land M."/>
            <person name="Lapidus A."/>
            <person name="Larimer F.W."/>
            <person name="Lucas S."/>
            <person name="Malfatti S.A."/>
            <person name="Meyer F."/>
            <person name="Paulsen I.T."/>
            <person name="Ren Q."/>
            <person name="Simon J."/>
            <person name="Bailey K."/>
            <person name="Diaz E."/>
            <person name="Fitzpatrick K.A."/>
            <person name="Glover B."/>
            <person name="Gwatney N."/>
            <person name="Korajkic A."/>
            <person name="Long A."/>
            <person name="Mobberley J.M."/>
            <person name="Pantry S.N."/>
            <person name="Pazder G."/>
            <person name="Peterson S."/>
            <person name="Quintanilla J.D."/>
            <person name="Sprinkle R."/>
            <person name="Stephens J."/>
            <person name="Thomas P."/>
            <person name="Vaughn R."/>
            <person name="Weber M.J."/>
            <person name="Wooten L.L."/>
        </authorList>
    </citation>
    <scope>NUCLEOTIDE SEQUENCE [LARGE SCALE GENOMIC DNA]</scope>
    <source>
        <strain>ATCC 33889 / DSM 1251</strain>
    </source>
</reference>
<keyword id="KW-0547">Nucleotide-binding</keyword>
<keyword id="KW-1185">Reference proteome</keyword>
<proteinExistence type="inferred from homology"/>
<comment type="function">
    <text evidence="1">Nucleotide-binding protein.</text>
</comment>
<comment type="similarity">
    <text evidence="1">Belongs to the YajQ family.</text>
</comment>
<accession>Q30UL1</accession>